<evidence type="ECO:0000255" key="1">
    <source>
        <dbReference type="HAMAP-Rule" id="MF_00242"/>
    </source>
</evidence>
<feature type="chain" id="PRO_0000336670" description="Arginine deiminase">
    <location>
        <begin position="1"/>
        <end position="414"/>
    </location>
</feature>
<feature type="active site" description="Amidino-cysteine intermediate" evidence="1">
    <location>
        <position position="402"/>
    </location>
</feature>
<gene>
    <name evidence="1" type="primary">arcA</name>
    <name type="ordered locus">OEOE_1118</name>
</gene>
<keyword id="KW-0056">Arginine metabolism</keyword>
<keyword id="KW-0963">Cytoplasm</keyword>
<keyword id="KW-0378">Hydrolase</keyword>
<keyword id="KW-1185">Reference proteome</keyword>
<organism>
    <name type="scientific">Oenococcus oeni (strain ATCC BAA-331 / PSU-1)</name>
    <dbReference type="NCBI Taxonomy" id="203123"/>
    <lineage>
        <taxon>Bacteria</taxon>
        <taxon>Bacillati</taxon>
        <taxon>Bacillota</taxon>
        <taxon>Bacilli</taxon>
        <taxon>Lactobacillales</taxon>
        <taxon>Lactobacillaceae</taxon>
        <taxon>Oenococcus</taxon>
    </lineage>
</organism>
<reference key="1">
    <citation type="journal article" date="2006" name="Proc. Natl. Acad. Sci. U.S.A.">
        <title>Comparative genomics of the lactic acid bacteria.</title>
        <authorList>
            <person name="Makarova K.S."/>
            <person name="Slesarev A."/>
            <person name="Wolf Y.I."/>
            <person name="Sorokin A."/>
            <person name="Mirkin B."/>
            <person name="Koonin E.V."/>
            <person name="Pavlov A."/>
            <person name="Pavlova N."/>
            <person name="Karamychev V."/>
            <person name="Polouchine N."/>
            <person name="Shakhova V."/>
            <person name="Grigoriev I."/>
            <person name="Lou Y."/>
            <person name="Rohksar D."/>
            <person name="Lucas S."/>
            <person name="Huang K."/>
            <person name="Goodstein D.M."/>
            <person name="Hawkins T."/>
            <person name="Plengvidhya V."/>
            <person name="Welker D."/>
            <person name="Hughes J."/>
            <person name="Goh Y."/>
            <person name="Benson A."/>
            <person name="Baldwin K."/>
            <person name="Lee J.-H."/>
            <person name="Diaz-Muniz I."/>
            <person name="Dosti B."/>
            <person name="Smeianov V."/>
            <person name="Wechter W."/>
            <person name="Barabote R."/>
            <person name="Lorca G."/>
            <person name="Altermann E."/>
            <person name="Barrangou R."/>
            <person name="Ganesan B."/>
            <person name="Xie Y."/>
            <person name="Rawsthorne H."/>
            <person name="Tamir D."/>
            <person name="Parker C."/>
            <person name="Breidt F."/>
            <person name="Broadbent J.R."/>
            <person name="Hutkins R."/>
            <person name="O'Sullivan D."/>
            <person name="Steele J."/>
            <person name="Unlu G."/>
            <person name="Saier M.H. Jr."/>
            <person name="Klaenhammer T."/>
            <person name="Richardson P."/>
            <person name="Kozyavkin S."/>
            <person name="Weimer B.C."/>
            <person name="Mills D.A."/>
        </authorList>
    </citation>
    <scope>NUCLEOTIDE SEQUENCE [LARGE SCALE GENOMIC DNA]</scope>
    <source>
        <strain>ATCC BAA-331 / PSU-1</strain>
    </source>
</reference>
<protein>
    <recommendedName>
        <fullName evidence="1">Arginine deiminase</fullName>
        <shortName evidence="1">ADI</shortName>
        <ecNumber evidence="1">3.5.3.6</ecNumber>
    </recommendedName>
    <alternativeName>
        <fullName evidence="1">Arginine dihydrolase</fullName>
        <shortName evidence="1">AD</shortName>
    </alternativeName>
</protein>
<dbReference type="EC" id="3.5.3.6" evidence="1"/>
<dbReference type="EMBL" id="CP000411">
    <property type="protein sequence ID" value="ABJ57017.1"/>
    <property type="molecule type" value="Genomic_DNA"/>
</dbReference>
<dbReference type="RefSeq" id="WP_002823245.1">
    <property type="nucleotide sequence ID" value="NC_008528.1"/>
</dbReference>
<dbReference type="SMR" id="Q04EV5"/>
<dbReference type="STRING" id="203123.OEOE_1118"/>
<dbReference type="KEGG" id="ooe:OEOE_1118"/>
<dbReference type="PATRIC" id="fig|203123.7.peg.1140"/>
<dbReference type="eggNOG" id="COG2235">
    <property type="taxonomic scope" value="Bacteria"/>
</dbReference>
<dbReference type="HOGENOM" id="CLU_052662_0_1_9"/>
<dbReference type="UniPathway" id="UPA00254">
    <property type="reaction ID" value="UER00364"/>
</dbReference>
<dbReference type="Proteomes" id="UP000000774">
    <property type="component" value="Chromosome"/>
</dbReference>
<dbReference type="GO" id="GO:0005737">
    <property type="term" value="C:cytoplasm"/>
    <property type="evidence" value="ECO:0007669"/>
    <property type="project" value="UniProtKB-SubCell"/>
</dbReference>
<dbReference type="GO" id="GO:0016990">
    <property type="term" value="F:arginine deiminase activity"/>
    <property type="evidence" value="ECO:0007669"/>
    <property type="project" value="UniProtKB-UniRule"/>
</dbReference>
<dbReference type="GO" id="GO:0019547">
    <property type="term" value="P:arginine catabolic process to ornithine"/>
    <property type="evidence" value="ECO:0007669"/>
    <property type="project" value="UniProtKB-UniRule"/>
</dbReference>
<dbReference type="GO" id="GO:0019546">
    <property type="term" value="P:arginine deiminase pathway"/>
    <property type="evidence" value="ECO:0007669"/>
    <property type="project" value="TreeGrafter"/>
</dbReference>
<dbReference type="Gene3D" id="1.10.3930.10">
    <property type="entry name" value="Arginine deiminase"/>
    <property type="match status" value="1"/>
</dbReference>
<dbReference type="Gene3D" id="3.75.10.10">
    <property type="entry name" value="L-arginine/glycine Amidinotransferase, Chain A"/>
    <property type="match status" value="1"/>
</dbReference>
<dbReference type="HAMAP" id="MF_00242">
    <property type="entry name" value="Arg_deiminase"/>
    <property type="match status" value="1"/>
</dbReference>
<dbReference type="InterPro" id="IPR003876">
    <property type="entry name" value="Arg_deiminase"/>
</dbReference>
<dbReference type="NCBIfam" id="TIGR01078">
    <property type="entry name" value="arcA"/>
    <property type="match status" value="1"/>
</dbReference>
<dbReference type="NCBIfam" id="NF002381">
    <property type="entry name" value="PRK01388.1"/>
    <property type="match status" value="1"/>
</dbReference>
<dbReference type="PANTHER" id="PTHR47271">
    <property type="entry name" value="ARGININE DEIMINASE"/>
    <property type="match status" value="1"/>
</dbReference>
<dbReference type="PANTHER" id="PTHR47271:SF2">
    <property type="entry name" value="ARGININE DEIMINASE"/>
    <property type="match status" value="1"/>
</dbReference>
<dbReference type="Pfam" id="PF02274">
    <property type="entry name" value="ADI"/>
    <property type="match status" value="1"/>
</dbReference>
<dbReference type="PIRSF" id="PIRSF006356">
    <property type="entry name" value="Arg_deiminase"/>
    <property type="match status" value="1"/>
</dbReference>
<dbReference type="PRINTS" id="PR01466">
    <property type="entry name" value="ARGDEIMINASE"/>
</dbReference>
<dbReference type="SUPFAM" id="SSF55909">
    <property type="entry name" value="Pentein"/>
    <property type="match status" value="1"/>
</dbReference>
<name>ARCA_OENOB</name>
<comment type="catalytic activity">
    <reaction evidence="1">
        <text>L-arginine + H2O = L-citrulline + NH4(+)</text>
        <dbReference type="Rhea" id="RHEA:19597"/>
        <dbReference type="ChEBI" id="CHEBI:15377"/>
        <dbReference type="ChEBI" id="CHEBI:28938"/>
        <dbReference type="ChEBI" id="CHEBI:32682"/>
        <dbReference type="ChEBI" id="CHEBI:57743"/>
        <dbReference type="EC" id="3.5.3.6"/>
    </reaction>
</comment>
<comment type="pathway">
    <text evidence="1">Amino-acid degradation; L-arginine degradation via ADI pathway; carbamoyl phosphate from L-arginine: step 1/2.</text>
</comment>
<comment type="subcellular location">
    <subcellularLocation>
        <location evidence="1">Cytoplasm</location>
    </subcellularLocation>
</comment>
<comment type="similarity">
    <text evidence="1">Belongs to the arginine deiminase family.</text>
</comment>
<sequence length="414" mass="46721">MLTEKSPIHVNSEIGRLKTVILHRPGKEIENLTPDTMGPLLFDDIPYLLLAQKEHDNFADTLRKKGVEVLYLERLVVQALETDEQVKAFFIDKMIAESGFKSGTIHAQLQKFLVGLPTNEMVDKIMAGVRFDEIELASKDLQNFSFDRTRPFLMAPMPNLYFTRDPSASIGDGLTINRMTFKARRRESMFTELVINHHPRFANKNINVWRDRNHVARLEGGDELVLSDHVLAIGLSQRTSSEAIKDVAKNLFAGSNYDTVIAIQIPQTHATMHLDTVFTMVNFDQFTVHPMILNNKGELPILVMHKDKQNQIKIESSNNLKTVLKEQLGLNELDLISTGDGDPIISAREQWNDGSNTLAIAPGSVVTYDRNYVSNEALRKHGIQVSEVPSSEISRGRGGPRCMSMPIYREDIEK</sequence>
<accession>Q04EV5</accession>
<proteinExistence type="inferred from homology"/>